<evidence type="ECO:0000255" key="1">
    <source>
        <dbReference type="HAMAP-Rule" id="MF_01446"/>
    </source>
</evidence>
<organism>
    <name type="scientific">Pyrococcus horikoshii (strain ATCC 700860 / DSM 12428 / JCM 9974 / NBRC 100139 / OT-3)</name>
    <dbReference type="NCBI Taxonomy" id="70601"/>
    <lineage>
        <taxon>Archaea</taxon>
        <taxon>Methanobacteriati</taxon>
        <taxon>Methanobacteriota</taxon>
        <taxon>Thermococci</taxon>
        <taxon>Thermococcales</taxon>
        <taxon>Thermococcaceae</taxon>
        <taxon>Pyrococcus</taxon>
    </lineage>
</organism>
<proteinExistence type="inferred from homology"/>
<reference key="1">
    <citation type="journal article" date="1998" name="DNA Res.">
        <title>Complete sequence and gene organization of the genome of a hyper-thermophilic archaebacterium, Pyrococcus horikoshii OT3.</title>
        <authorList>
            <person name="Kawarabayasi Y."/>
            <person name="Sawada M."/>
            <person name="Horikawa H."/>
            <person name="Haikawa Y."/>
            <person name="Hino Y."/>
            <person name="Yamamoto S."/>
            <person name="Sekine M."/>
            <person name="Baba S."/>
            <person name="Kosugi H."/>
            <person name="Hosoyama A."/>
            <person name="Nagai Y."/>
            <person name="Sakai M."/>
            <person name="Ogura K."/>
            <person name="Otsuka R."/>
            <person name="Nakazawa H."/>
            <person name="Takamiya M."/>
            <person name="Ohfuku Y."/>
            <person name="Funahashi T."/>
            <person name="Tanaka T."/>
            <person name="Kudoh Y."/>
            <person name="Yamazaki J."/>
            <person name="Kushida N."/>
            <person name="Oguchi A."/>
            <person name="Aoki K."/>
            <person name="Yoshizawa T."/>
            <person name="Nakamura Y."/>
            <person name="Robb F.T."/>
            <person name="Horikoshi K."/>
            <person name="Masuchi Y."/>
            <person name="Shizuya H."/>
            <person name="Kikuchi H."/>
        </authorList>
    </citation>
    <scope>NUCLEOTIDE SEQUENCE [LARGE SCALE GENOMIC DNA]</scope>
    <source>
        <strain>ATCC 700860 / DSM 12428 / JCM 9974 / NBRC 100139 / OT-3</strain>
    </source>
</reference>
<gene>
    <name evidence="1" type="primary">kae1</name>
    <name type="ordered locus">PH1987</name>
</gene>
<protein>
    <recommendedName>
        <fullName evidence="1">tRNA N6-adenosine threonylcarbamoyltransferase</fullName>
        <ecNumber evidence="1">2.3.1.234</ecNumber>
    </recommendedName>
    <alternativeName>
        <fullName evidence="1">N6-L-threonylcarbamoyladenine synthase</fullName>
        <shortName evidence="1">t(6)A synthase</shortName>
    </alternativeName>
    <alternativeName>
        <fullName evidence="1">t(6)A37 threonylcarbamoyladenosine biosynthesis protein Kae1</fullName>
    </alternativeName>
    <alternativeName>
        <fullName evidence="1">tRNA threonylcarbamoyladenosine biosynthesis protein Kae1</fullName>
    </alternativeName>
</protein>
<name>KAE1_PYRHO</name>
<comment type="function">
    <text evidence="1">Required for the formation of a threonylcarbamoyl group on adenosine at position 37 (t(6)A37) in tRNAs that read codons beginning with adenine. Is a component of the KEOPS complex that is probably involved in the transfer of the threonylcarbamoyl moiety of threonylcarbamoyl-AMP (TC-AMP) to the N6 group of A37. Kae1 likely plays a direct catalytic role in this reaction, but requires other protein(s) of the complex to fulfill this activity.</text>
</comment>
<comment type="catalytic activity">
    <reaction evidence="1">
        <text>L-threonylcarbamoyladenylate + adenosine(37) in tRNA = N(6)-L-threonylcarbamoyladenosine(37) in tRNA + AMP + H(+)</text>
        <dbReference type="Rhea" id="RHEA:37059"/>
        <dbReference type="Rhea" id="RHEA-COMP:10162"/>
        <dbReference type="Rhea" id="RHEA-COMP:10163"/>
        <dbReference type="ChEBI" id="CHEBI:15378"/>
        <dbReference type="ChEBI" id="CHEBI:73682"/>
        <dbReference type="ChEBI" id="CHEBI:74411"/>
        <dbReference type="ChEBI" id="CHEBI:74418"/>
        <dbReference type="ChEBI" id="CHEBI:456215"/>
        <dbReference type="EC" id="2.3.1.234"/>
    </reaction>
</comment>
<comment type="cofactor">
    <cofactor evidence="1">
        <name>Fe(2+)</name>
        <dbReference type="ChEBI" id="CHEBI:29033"/>
    </cofactor>
    <text evidence="1">Binds 1 Fe(2+) ion per subunit.</text>
</comment>
<comment type="subunit">
    <text evidence="1">Monomer. Component of the KEOPS complex that consists of Kae1, Bud32, Cgi121 and Pcc1; the whole complex dimerizes.</text>
</comment>
<comment type="subcellular location">
    <subcellularLocation>
        <location evidence="1">Cytoplasm</location>
    </subcellularLocation>
</comment>
<comment type="similarity">
    <text evidence="1">Belongs to the KAE1 / TsaD family.</text>
</comment>
<keyword id="KW-0012">Acyltransferase</keyword>
<keyword id="KW-0963">Cytoplasm</keyword>
<keyword id="KW-0408">Iron</keyword>
<keyword id="KW-0479">Metal-binding</keyword>
<keyword id="KW-0808">Transferase</keyword>
<keyword id="KW-0819">tRNA processing</keyword>
<sequence>MLALGIEGTAHTLGIGIVSEKKVLANVFDTLTTEKGGIHPKEAAEHHARLMKPLLKKALEKAGISMDDIDVIAFSQGPGLGPALRVVATAARALAIRYNKPIVGVNHCIAHVEITKMFGIKDPVGLYVSGGNTQVLALEGGRYRVFGETLDIGIGNAIDVFARELGLGFPGGPKLEKLAEKGKNYIDLPYAVKGMDLSFSGLLTEAIRKYRSGKFRVEDLAYSFQETAFAALVEVTERALAHTEKKEVVLVGGVAANNRLREMLKIMAEDRGVKFFVPPYDLCRDNGAMIAYTGLRMYKAGISFPLEKTIVKQKFRTDEVEITW</sequence>
<dbReference type="EC" id="2.3.1.234" evidence="1"/>
<dbReference type="EMBL" id="BA000001">
    <property type="protein sequence ID" value="BAA31114.1"/>
    <property type="molecule type" value="Genomic_DNA"/>
</dbReference>
<dbReference type="PIR" id="C71215">
    <property type="entry name" value="C71215"/>
</dbReference>
<dbReference type="RefSeq" id="WP_010886049.1">
    <property type="nucleotide sequence ID" value="NC_000961.1"/>
</dbReference>
<dbReference type="SMR" id="O57716"/>
<dbReference type="STRING" id="70601.gene:9379000"/>
<dbReference type="EnsemblBacteria" id="BAA31114">
    <property type="protein sequence ID" value="BAA31114"/>
    <property type="gene ID" value="BAA31114"/>
</dbReference>
<dbReference type="GeneID" id="1442831"/>
<dbReference type="KEGG" id="pho:PH1987"/>
<dbReference type="eggNOG" id="arCOG01183">
    <property type="taxonomic scope" value="Archaea"/>
</dbReference>
<dbReference type="OrthoDB" id="6818at2157"/>
<dbReference type="Proteomes" id="UP000000752">
    <property type="component" value="Chromosome"/>
</dbReference>
<dbReference type="GO" id="GO:0005737">
    <property type="term" value="C:cytoplasm"/>
    <property type="evidence" value="ECO:0007669"/>
    <property type="project" value="UniProtKB-SubCell"/>
</dbReference>
<dbReference type="GO" id="GO:0000408">
    <property type="term" value="C:EKC/KEOPS complex"/>
    <property type="evidence" value="ECO:0007669"/>
    <property type="project" value="InterPro"/>
</dbReference>
<dbReference type="GO" id="GO:0005506">
    <property type="term" value="F:iron ion binding"/>
    <property type="evidence" value="ECO:0007669"/>
    <property type="project" value="UniProtKB-UniRule"/>
</dbReference>
<dbReference type="GO" id="GO:0061711">
    <property type="term" value="F:N(6)-L-threonylcarbamoyladenine synthase activity"/>
    <property type="evidence" value="ECO:0007669"/>
    <property type="project" value="UniProtKB-EC"/>
</dbReference>
<dbReference type="GO" id="GO:0002949">
    <property type="term" value="P:tRNA threonylcarbamoyladenosine modification"/>
    <property type="evidence" value="ECO:0007669"/>
    <property type="project" value="UniProtKB-UniRule"/>
</dbReference>
<dbReference type="CDD" id="cd24131">
    <property type="entry name" value="ASKHA_NBD_Kae1_arch_bac"/>
    <property type="match status" value="1"/>
</dbReference>
<dbReference type="FunFam" id="3.30.420.40:FF:000038">
    <property type="entry name" value="Probable tRNA N6-adenosine threonylcarbamoyltransferase"/>
    <property type="match status" value="1"/>
</dbReference>
<dbReference type="Gene3D" id="3.30.420.40">
    <property type="match status" value="2"/>
</dbReference>
<dbReference type="HAMAP" id="MF_01446">
    <property type="entry name" value="Kae1"/>
    <property type="match status" value="1"/>
</dbReference>
<dbReference type="InterPro" id="IPR043129">
    <property type="entry name" value="ATPase_NBD"/>
</dbReference>
<dbReference type="InterPro" id="IPR000905">
    <property type="entry name" value="Gcp-like_dom"/>
</dbReference>
<dbReference type="InterPro" id="IPR017861">
    <property type="entry name" value="KAE1/TsaD"/>
</dbReference>
<dbReference type="InterPro" id="IPR034680">
    <property type="entry name" value="Kae1_archaea_euk"/>
</dbReference>
<dbReference type="InterPro" id="IPR017860">
    <property type="entry name" value="Peptidase_M22_CS"/>
</dbReference>
<dbReference type="NCBIfam" id="TIGR03722">
    <property type="entry name" value="arch_KAE1"/>
    <property type="match status" value="1"/>
</dbReference>
<dbReference type="NCBIfam" id="TIGR00329">
    <property type="entry name" value="gcp_kae1"/>
    <property type="match status" value="1"/>
</dbReference>
<dbReference type="NCBIfam" id="NF007174">
    <property type="entry name" value="PRK09605.1"/>
    <property type="match status" value="1"/>
</dbReference>
<dbReference type="PANTHER" id="PTHR11735">
    <property type="entry name" value="TRNA N6-ADENOSINE THREONYLCARBAMOYLTRANSFERASE"/>
    <property type="match status" value="1"/>
</dbReference>
<dbReference type="PANTHER" id="PTHR11735:SF14">
    <property type="entry name" value="TRNA N6-ADENOSINE THREONYLCARBAMOYLTRANSFERASE"/>
    <property type="match status" value="1"/>
</dbReference>
<dbReference type="Pfam" id="PF00814">
    <property type="entry name" value="TsaD"/>
    <property type="match status" value="1"/>
</dbReference>
<dbReference type="PRINTS" id="PR00789">
    <property type="entry name" value="OSIALOPTASE"/>
</dbReference>
<dbReference type="SUPFAM" id="SSF53067">
    <property type="entry name" value="Actin-like ATPase domain"/>
    <property type="match status" value="1"/>
</dbReference>
<dbReference type="PROSITE" id="PS01016">
    <property type="entry name" value="GLYCOPROTEASE"/>
    <property type="match status" value="1"/>
</dbReference>
<accession>O57716</accession>
<feature type="chain" id="PRO_0000096982" description="tRNA N6-adenosine threonylcarbamoyltransferase">
    <location>
        <begin position="1"/>
        <end position="324"/>
    </location>
</feature>
<feature type="binding site" evidence="1">
    <location>
        <position position="107"/>
    </location>
    <ligand>
        <name>Fe cation</name>
        <dbReference type="ChEBI" id="CHEBI:24875"/>
    </ligand>
</feature>
<feature type="binding site" evidence="1">
    <location>
        <position position="111"/>
    </location>
    <ligand>
        <name>Fe cation</name>
        <dbReference type="ChEBI" id="CHEBI:24875"/>
    </ligand>
</feature>
<feature type="binding site" evidence="1">
    <location>
        <begin position="127"/>
        <end position="131"/>
    </location>
    <ligand>
        <name>substrate</name>
    </ligand>
</feature>
<feature type="binding site" evidence="1">
    <location>
        <position position="127"/>
    </location>
    <ligand>
        <name>Fe cation</name>
        <dbReference type="ChEBI" id="CHEBI:24875"/>
    </ligand>
</feature>
<feature type="binding site" evidence="1">
    <location>
        <position position="159"/>
    </location>
    <ligand>
        <name>substrate</name>
    </ligand>
</feature>
<feature type="binding site" evidence="1">
    <location>
        <position position="172"/>
    </location>
    <ligand>
        <name>substrate</name>
    </ligand>
</feature>
<feature type="binding site" evidence="1">
    <location>
        <position position="176"/>
    </location>
    <ligand>
        <name>substrate</name>
    </ligand>
</feature>
<feature type="binding site" evidence="1">
    <location>
        <position position="257"/>
    </location>
    <ligand>
        <name>substrate</name>
    </ligand>
</feature>
<feature type="binding site" evidence="1">
    <location>
        <position position="285"/>
    </location>
    <ligand>
        <name>Fe cation</name>
        <dbReference type="ChEBI" id="CHEBI:24875"/>
    </ligand>
</feature>